<evidence type="ECO:0000255" key="1">
    <source>
        <dbReference type="HAMAP-Rule" id="MF_04074"/>
    </source>
</evidence>
<evidence type="ECO:0000256" key="2">
    <source>
        <dbReference type="SAM" id="MobiDB-lite"/>
    </source>
</evidence>
<evidence type="ECO:0007829" key="3">
    <source>
        <dbReference type="PDB" id="3I7K"/>
    </source>
</evidence>
<gene>
    <name evidence="1" type="primary">X</name>
</gene>
<comment type="function">
    <text evidence="1">Multifunctional protein that plays a role in silencing host antiviral defenses and promoting viral transcription. Does not seem to be essential for HBV infection. May be directly involved in development of cirrhosis and liver cancer (hepatocellular carcinoma). Most of cytosolic activities involve modulation of cytosolic calcium. The effect on apoptosis is controversial depending on the cell types in which the studies have been conducted. May induce apoptosis by localizing in mitochondria and causing loss of mitochondrial membrane potential. May also modulate apoptosis by binding host CFLAR, a key regulator of the death-inducing signaling complex (DISC). Promotes viral transcription by using the host E3 ubiquitin ligase DDB1 to target the SMC5-SMC6 complex to proteasomal degradation. This host complex would otherwise bind to viral episomal DNA, and prevents its transcription. Moderately stimulates transcription of many different viral and cellular transcription elements. Promoters and enhancers stimulated by HBx contain DNA binding sites for NF-kappa-B, AP-1, AP-2, c-EBP, ATF/CREB, or the calcium-activated factor NF-AT.</text>
</comment>
<comment type="subunit">
    <text evidence="1">May form homodimer. May interact with host CEBPA, CFLAR, CREB1, DDB1, E4F1, HBXIP, HSPD1/HSP60, NFKBIA, POLR2E and SMAD4. Interacts with host SMC5-SMC6 complex and induces its degradation. Interacts with host TRPC4AP; leading to prevent ubiquitination of TRPC4AP. Interacts with host PLSCR1; this interaction promotes ubiquitination and degradation of HBx and impairs HBx-mediated cell proliferation.</text>
</comment>
<comment type="subcellular location">
    <subcellularLocation>
        <location evidence="1">Host cytoplasm</location>
    </subcellularLocation>
    <subcellularLocation>
        <location evidence="1">Host nucleus</location>
    </subcellularLocation>
    <subcellularLocation>
        <location evidence="1">Host mitochondrion</location>
    </subcellularLocation>
    <text evidence="1">Mainly cytoplasmic as only a fraction is detected in the nucleus. In cytoplasm, a minor fraction associates with mitochondria or proteasomes.</text>
</comment>
<comment type="PTM">
    <text evidence="1">A fraction may be phosphorylated in insect cells and HepG2 cells, a human hepatoblastoma cell line. Phosphorylated in vitro by host protein kinase C or mitogen-activated protein kinase. N-acetylated in insect cells.</text>
</comment>
<comment type="similarity">
    <text evidence="1">Belongs to the orthohepadnavirus protein X family.</text>
</comment>
<dbReference type="EMBL" id="J02442">
    <property type="status" value="NOT_ANNOTATED_CDS"/>
    <property type="molecule type" value="Genomic_DNA"/>
</dbReference>
<dbReference type="PIR" id="A03720">
    <property type="entry name" value="QQVLC1"/>
</dbReference>
<dbReference type="PDB" id="3I7K">
    <property type="method" value="X-ray"/>
    <property type="resolution" value="2.80 A"/>
    <property type="chains" value="B=86-99"/>
</dbReference>
<dbReference type="PDBsum" id="3I7K"/>
<dbReference type="SMR" id="P03167"/>
<dbReference type="EvolutionaryTrace" id="P03167"/>
<dbReference type="Proteomes" id="UP000007631">
    <property type="component" value="Genome"/>
</dbReference>
<dbReference type="GO" id="GO:0033650">
    <property type="term" value="C:host cell mitochondrion"/>
    <property type="evidence" value="ECO:0007669"/>
    <property type="project" value="UniProtKB-SubCell"/>
</dbReference>
<dbReference type="GO" id="GO:0042025">
    <property type="term" value="C:host cell nucleus"/>
    <property type="evidence" value="ECO:0007669"/>
    <property type="project" value="UniProtKB-SubCell"/>
</dbReference>
<dbReference type="GO" id="GO:0006351">
    <property type="term" value="P:DNA-templated transcription"/>
    <property type="evidence" value="ECO:0007669"/>
    <property type="project" value="UniProtKB-UniRule"/>
</dbReference>
<dbReference type="GO" id="GO:0085033">
    <property type="term" value="P:symbiont-mediated activation of host NF-kappaB cascade"/>
    <property type="evidence" value="ECO:0007669"/>
    <property type="project" value="UniProtKB-UniRule"/>
</dbReference>
<dbReference type="GO" id="GO:0039592">
    <property type="term" value="P:symbiont-mediated arrest of host cell cycle during G2/M transition"/>
    <property type="evidence" value="ECO:0007669"/>
    <property type="project" value="UniProtKB-UniRule"/>
</dbReference>
<dbReference type="GO" id="GO:0019079">
    <property type="term" value="P:viral genome replication"/>
    <property type="evidence" value="ECO:0007669"/>
    <property type="project" value="UniProtKB-UniRule"/>
</dbReference>
<dbReference type="HAMAP" id="MF_04074">
    <property type="entry name" value="HBV_X"/>
    <property type="match status" value="1"/>
</dbReference>
<dbReference type="InterPro" id="IPR000236">
    <property type="entry name" value="Transactivation_prot_X"/>
</dbReference>
<dbReference type="Pfam" id="PF00739">
    <property type="entry name" value="X"/>
    <property type="match status" value="1"/>
</dbReference>
<sequence>MAARLCCQLDPARDVLLLRPFGSQSSGPPFPRPSAGSAASPASSLSASDESDLPLGRLPACFASASGPCCLVVTCAELRTMDSTVNFVSWHANRQLGMPSKDLWTPYIRDQLLTKWEEGSIDPRLSIFVLGGCRHKCMRLP</sequence>
<reference key="1">
    <citation type="journal article" date="1982" name="J. Virol.">
        <title>Nucleotide sequence of a cloned woodchuck hepatitis virus genome: comparison with the hepatitis B virus sequence.</title>
        <authorList>
            <person name="Galibert F."/>
            <person name="Chen T.N."/>
            <person name="Mandart E."/>
        </authorList>
    </citation>
    <scope>NUCLEOTIDE SEQUENCE [GENOMIC DNA]</scope>
</reference>
<protein>
    <recommendedName>
        <fullName evidence="1">Protein X</fullName>
    </recommendedName>
    <alternativeName>
        <fullName evidence="1">HBx</fullName>
    </alternativeName>
    <alternativeName>
        <fullName evidence="1">Peptide X</fullName>
    </alternativeName>
    <alternativeName>
        <fullName evidence="1">pX</fullName>
    </alternativeName>
</protein>
<organism>
    <name type="scientific">Woodchuck hepatitis B virus (isolate 1)</name>
    <name type="common">WHV</name>
    <dbReference type="NCBI Taxonomy" id="10430"/>
    <lineage>
        <taxon>Viruses</taxon>
        <taxon>Riboviria</taxon>
        <taxon>Pararnavirae</taxon>
        <taxon>Artverviricota</taxon>
        <taxon>Revtraviricetes</taxon>
        <taxon>Blubervirales</taxon>
        <taxon>Hepadnaviridae</taxon>
        <taxon>Orthohepadnavirus</taxon>
        <taxon>Woodchuck hepatitis virus</taxon>
    </lineage>
</organism>
<accession>P03167</accession>
<organismHost>
    <name type="scientific">Marmota monax</name>
    <name type="common">Woodchuck</name>
    <dbReference type="NCBI Taxonomy" id="9995"/>
</organismHost>
<name>X_WHV1</name>
<feature type="chain" id="PRO_0000222370" description="Protein X">
    <location>
        <begin position="1"/>
        <end position="141"/>
    </location>
</feature>
<feature type="region of interest" description="Disordered" evidence="2">
    <location>
        <begin position="24"/>
        <end position="51"/>
    </location>
</feature>
<feature type="region of interest" description="Mitochondrial targeting sequence" evidence="1">
    <location>
        <begin position="68"/>
        <end position="113"/>
    </location>
</feature>
<feature type="compositionally biased region" description="Low complexity" evidence="2">
    <location>
        <begin position="24"/>
        <end position="48"/>
    </location>
</feature>
<feature type="helix" evidence="3">
    <location>
        <begin position="87"/>
        <end position="96"/>
    </location>
</feature>
<keyword id="KW-0002">3D-structure</keyword>
<keyword id="KW-1074">Activation of host NF-kappa-B by virus</keyword>
<keyword id="KW-0010">Activator</keyword>
<keyword id="KW-0053">Apoptosis</keyword>
<keyword id="KW-1035">Host cytoplasm</keyword>
<keyword id="KW-1079">Host G2/M cell cycle arrest by virus</keyword>
<keyword id="KW-1045">Host mitochondrion</keyword>
<keyword id="KW-1048">Host nucleus</keyword>
<keyword id="KW-0945">Host-virus interaction</keyword>
<keyword id="KW-1121">Modulation of host cell cycle by virus</keyword>
<keyword id="KW-0804">Transcription</keyword>
<keyword id="KW-0805">Transcription regulation</keyword>
<proteinExistence type="evidence at protein level"/>